<reference key="1">
    <citation type="journal article" date="2012" name="BMC Genomics">
        <title>Comparative genomics and transcriptomics of lineages I, II, and III strains of Listeria monocytogenes.</title>
        <authorList>
            <person name="Hain T."/>
            <person name="Ghai R."/>
            <person name="Billion A."/>
            <person name="Kuenne C.T."/>
            <person name="Steinweg C."/>
            <person name="Izar B."/>
            <person name="Mohamed W."/>
            <person name="Mraheil M."/>
            <person name="Domann E."/>
            <person name="Schaffrath S."/>
            <person name="Karst U."/>
            <person name="Goesmann A."/>
            <person name="Oehm S."/>
            <person name="Puhler A."/>
            <person name="Merkl R."/>
            <person name="Vorwerk S."/>
            <person name="Glaser P."/>
            <person name="Garrido P."/>
            <person name="Rusniok C."/>
            <person name="Buchrieser C."/>
            <person name="Goebel W."/>
            <person name="Chakraborty T."/>
        </authorList>
    </citation>
    <scope>NUCLEOTIDE SEQUENCE [LARGE SCALE GENOMIC DNA]</scope>
    <source>
        <strain>CLIP80459</strain>
    </source>
</reference>
<gene>
    <name evidence="1" type="primary">rplN</name>
    <name type="ordered locus">Lm4b_02589</name>
</gene>
<comment type="function">
    <text evidence="1">Binds to 23S rRNA. Forms part of two intersubunit bridges in the 70S ribosome.</text>
</comment>
<comment type="subunit">
    <text evidence="1">Part of the 50S ribosomal subunit. Forms a cluster with proteins L3 and L19. In the 70S ribosome, L14 and L19 interact and together make contacts with the 16S rRNA in bridges B5 and B8.</text>
</comment>
<comment type="similarity">
    <text evidence="1">Belongs to the universal ribosomal protein uL14 family.</text>
</comment>
<accession>C1KZH0</accession>
<feature type="chain" id="PRO_1000214985" description="Large ribosomal subunit protein uL14">
    <location>
        <begin position="1"/>
        <end position="122"/>
    </location>
</feature>
<sequence>MIQQESRMKVADNSGAREVLTIKVLGGSGRKTANIGDVVVCTVKQATPGGVVKKGEVVKAVIVRTKSGARRQDGSYIKFDENACVIIRDDKSPRGTRIFGPVARELRENNFMKIVSLAPEVL</sequence>
<evidence type="ECO:0000255" key="1">
    <source>
        <dbReference type="HAMAP-Rule" id="MF_01367"/>
    </source>
</evidence>
<evidence type="ECO:0000305" key="2"/>
<protein>
    <recommendedName>
        <fullName evidence="1">Large ribosomal subunit protein uL14</fullName>
    </recommendedName>
    <alternativeName>
        <fullName evidence="2">50S ribosomal protein L14</fullName>
    </alternativeName>
</protein>
<proteinExistence type="inferred from homology"/>
<keyword id="KW-0687">Ribonucleoprotein</keyword>
<keyword id="KW-0689">Ribosomal protein</keyword>
<keyword id="KW-0694">RNA-binding</keyword>
<keyword id="KW-0699">rRNA-binding</keyword>
<dbReference type="EMBL" id="FM242711">
    <property type="protein sequence ID" value="CAS06343.1"/>
    <property type="molecule type" value="Genomic_DNA"/>
</dbReference>
<dbReference type="RefSeq" id="WP_003723686.1">
    <property type="nucleotide sequence ID" value="NC_012488.1"/>
</dbReference>
<dbReference type="SMR" id="C1KZH0"/>
<dbReference type="GeneID" id="93240503"/>
<dbReference type="KEGG" id="lmc:Lm4b_02589"/>
<dbReference type="HOGENOM" id="CLU_095071_2_1_9"/>
<dbReference type="GO" id="GO:0022625">
    <property type="term" value="C:cytosolic large ribosomal subunit"/>
    <property type="evidence" value="ECO:0007669"/>
    <property type="project" value="TreeGrafter"/>
</dbReference>
<dbReference type="GO" id="GO:0070180">
    <property type="term" value="F:large ribosomal subunit rRNA binding"/>
    <property type="evidence" value="ECO:0007669"/>
    <property type="project" value="TreeGrafter"/>
</dbReference>
<dbReference type="GO" id="GO:0003735">
    <property type="term" value="F:structural constituent of ribosome"/>
    <property type="evidence" value="ECO:0007669"/>
    <property type="project" value="InterPro"/>
</dbReference>
<dbReference type="GO" id="GO:0006412">
    <property type="term" value="P:translation"/>
    <property type="evidence" value="ECO:0007669"/>
    <property type="project" value="UniProtKB-UniRule"/>
</dbReference>
<dbReference type="CDD" id="cd00337">
    <property type="entry name" value="Ribosomal_uL14"/>
    <property type="match status" value="1"/>
</dbReference>
<dbReference type="FunFam" id="2.40.150.20:FF:000001">
    <property type="entry name" value="50S ribosomal protein L14"/>
    <property type="match status" value="1"/>
</dbReference>
<dbReference type="Gene3D" id="2.40.150.20">
    <property type="entry name" value="Ribosomal protein L14"/>
    <property type="match status" value="1"/>
</dbReference>
<dbReference type="HAMAP" id="MF_01367">
    <property type="entry name" value="Ribosomal_uL14"/>
    <property type="match status" value="1"/>
</dbReference>
<dbReference type="InterPro" id="IPR000218">
    <property type="entry name" value="Ribosomal_uL14"/>
</dbReference>
<dbReference type="InterPro" id="IPR005745">
    <property type="entry name" value="Ribosomal_uL14_bac-type"/>
</dbReference>
<dbReference type="InterPro" id="IPR019972">
    <property type="entry name" value="Ribosomal_uL14_CS"/>
</dbReference>
<dbReference type="InterPro" id="IPR036853">
    <property type="entry name" value="Ribosomal_uL14_sf"/>
</dbReference>
<dbReference type="NCBIfam" id="TIGR01067">
    <property type="entry name" value="rplN_bact"/>
    <property type="match status" value="1"/>
</dbReference>
<dbReference type="PANTHER" id="PTHR11761">
    <property type="entry name" value="50S/60S RIBOSOMAL PROTEIN L14/L23"/>
    <property type="match status" value="1"/>
</dbReference>
<dbReference type="PANTHER" id="PTHR11761:SF3">
    <property type="entry name" value="LARGE RIBOSOMAL SUBUNIT PROTEIN UL14M"/>
    <property type="match status" value="1"/>
</dbReference>
<dbReference type="Pfam" id="PF00238">
    <property type="entry name" value="Ribosomal_L14"/>
    <property type="match status" value="1"/>
</dbReference>
<dbReference type="SMART" id="SM01374">
    <property type="entry name" value="Ribosomal_L14"/>
    <property type="match status" value="1"/>
</dbReference>
<dbReference type="SUPFAM" id="SSF50193">
    <property type="entry name" value="Ribosomal protein L14"/>
    <property type="match status" value="1"/>
</dbReference>
<dbReference type="PROSITE" id="PS00049">
    <property type="entry name" value="RIBOSOMAL_L14"/>
    <property type="match status" value="1"/>
</dbReference>
<name>RL14_LISMC</name>
<organism>
    <name type="scientific">Listeria monocytogenes serotype 4b (strain CLIP80459)</name>
    <dbReference type="NCBI Taxonomy" id="568819"/>
    <lineage>
        <taxon>Bacteria</taxon>
        <taxon>Bacillati</taxon>
        <taxon>Bacillota</taxon>
        <taxon>Bacilli</taxon>
        <taxon>Bacillales</taxon>
        <taxon>Listeriaceae</taxon>
        <taxon>Listeria</taxon>
    </lineage>
</organism>